<organism>
    <name type="scientific">Homo sapiens</name>
    <name type="common">Human</name>
    <dbReference type="NCBI Taxonomy" id="9606"/>
    <lineage>
        <taxon>Eukaryota</taxon>
        <taxon>Metazoa</taxon>
        <taxon>Chordata</taxon>
        <taxon>Craniata</taxon>
        <taxon>Vertebrata</taxon>
        <taxon>Euteleostomi</taxon>
        <taxon>Mammalia</taxon>
        <taxon>Eutheria</taxon>
        <taxon>Euarchontoglires</taxon>
        <taxon>Primates</taxon>
        <taxon>Haplorrhini</taxon>
        <taxon>Catarrhini</taxon>
        <taxon>Hominidae</taxon>
        <taxon>Homo</taxon>
    </lineage>
</organism>
<proteinExistence type="inferred from homology"/>
<comment type="function">
    <text evidence="3">Odorant receptor.</text>
</comment>
<comment type="subcellular location">
    <subcellularLocation>
        <location>Cell membrane</location>
        <topology>Multi-pass membrane protein</topology>
    </subcellularLocation>
</comment>
<comment type="similarity">
    <text evidence="2">Belongs to the G-protein coupled receptor 1 family.</text>
</comment>
<comment type="online information" name="Human Olfactory Receptor Data Exploratorium (HORDE)">
    <link uri="http://genome.weizmann.ac.il/horde/card/index/symbol:OR6C75"/>
</comment>
<protein>
    <recommendedName>
        <fullName>Olfactory receptor 6C75</fullName>
    </recommendedName>
</protein>
<name>O6C75_HUMAN</name>
<evidence type="ECO:0000255" key="1"/>
<evidence type="ECO:0000255" key="2">
    <source>
        <dbReference type="PROSITE-ProRule" id="PRU00521"/>
    </source>
</evidence>
<evidence type="ECO:0000305" key="3"/>
<feature type="chain" id="PRO_0000309494" description="Olfactory receptor 6C75">
    <location>
        <begin position="1"/>
        <end position="312"/>
    </location>
</feature>
<feature type="topological domain" description="Extracellular" evidence="1">
    <location>
        <begin position="1"/>
        <end position="23"/>
    </location>
</feature>
<feature type="transmembrane region" description="Helical; Name=1" evidence="1">
    <location>
        <begin position="24"/>
        <end position="44"/>
    </location>
</feature>
<feature type="topological domain" description="Cytoplasmic" evidence="1">
    <location>
        <begin position="45"/>
        <end position="63"/>
    </location>
</feature>
<feature type="transmembrane region" description="Helical; Name=2" evidence="1">
    <location>
        <begin position="64"/>
        <end position="84"/>
    </location>
</feature>
<feature type="topological domain" description="Extracellular" evidence="1">
    <location>
        <begin position="85"/>
        <end position="95"/>
    </location>
</feature>
<feature type="transmembrane region" description="Helical; Name=3" evidence="1">
    <location>
        <begin position="96"/>
        <end position="116"/>
    </location>
</feature>
<feature type="topological domain" description="Cytoplasmic" evidence="1">
    <location>
        <begin position="117"/>
        <end position="140"/>
    </location>
</feature>
<feature type="transmembrane region" description="Helical; Name=4" evidence="1">
    <location>
        <begin position="141"/>
        <end position="161"/>
    </location>
</feature>
<feature type="topological domain" description="Extracellular" evidence="1">
    <location>
        <begin position="162"/>
        <end position="194"/>
    </location>
</feature>
<feature type="transmembrane region" description="Helical; Name=5" evidence="1">
    <location>
        <begin position="195"/>
        <end position="215"/>
    </location>
</feature>
<feature type="topological domain" description="Cytoplasmic" evidence="1">
    <location>
        <begin position="216"/>
        <end position="237"/>
    </location>
</feature>
<feature type="transmembrane region" description="Helical; Name=6" evidence="1">
    <location>
        <begin position="238"/>
        <end position="258"/>
    </location>
</feature>
<feature type="topological domain" description="Extracellular" evidence="1">
    <location>
        <begin position="259"/>
        <end position="269"/>
    </location>
</feature>
<feature type="transmembrane region" description="Helical; Name=7" evidence="1">
    <location>
        <begin position="270"/>
        <end position="290"/>
    </location>
</feature>
<feature type="topological domain" description="Cytoplasmic" evidence="1">
    <location>
        <begin position="291"/>
        <end position="312"/>
    </location>
</feature>
<feature type="glycosylation site" description="N-linked (GlcNAc...) asparagine" evidence="1">
    <location>
        <position position="3"/>
    </location>
</feature>
<feature type="disulfide bond" evidence="2">
    <location>
        <begin position="95"/>
        <end position="177"/>
    </location>
</feature>
<feature type="sequence variant" id="VAR_036972" description="In dbSNP:rs7976023.">
    <original>L</original>
    <variation>F</variation>
    <location>
        <position position="141"/>
    </location>
</feature>
<feature type="sequence variant" id="VAR_036973" description="In dbSNP:rs7976416.">
    <original>A</original>
    <variation>D</variation>
    <location>
        <position position="235"/>
    </location>
</feature>
<sequence length="312" mass="35372">MRNSTAVTDFILLGLTSDPQWQVVLFIFLLVTYMLSVTGNLIIITLTLSDPHLQTPMYFFLRNFSFLEISFTSVCIPRFLVTVVTGNRTISYNGCVAQLFFFIFLGVTEFYLLAAMSYDRCMAICKPLHYTIIMSTRVCTLLVFSSWLAGFLIIFPPVMLLLQLDFCASNVIDHFICDSSPMLQLSCTNTHFLELMAFFLAVVTLMVTLTLVILSYTNIIRTILKIPSMSQRKKAFSTCSSHMIVVSISYSSCIFMYIKTSARERVTLSKGVAVLNTSVAPLLNPFIYTLRNKQVKQAFKSMVQKMIFSLNK</sequence>
<gene>
    <name type="primary">OR6C75</name>
</gene>
<reference key="1">
    <citation type="journal article" date="2006" name="Nature">
        <title>The finished DNA sequence of human chromosome 12.</title>
        <authorList>
            <person name="Scherer S.E."/>
            <person name="Muzny D.M."/>
            <person name="Buhay C.J."/>
            <person name="Chen R."/>
            <person name="Cree A."/>
            <person name="Ding Y."/>
            <person name="Dugan-Rocha S."/>
            <person name="Gill R."/>
            <person name="Gunaratne P."/>
            <person name="Harris R.A."/>
            <person name="Hawes A.C."/>
            <person name="Hernandez J."/>
            <person name="Hodgson A.V."/>
            <person name="Hume J."/>
            <person name="Jackson A."/>
            <person name="Khan Z.M."/>
            <person name="Kovar-Smith C."/>
            <person name="Lewis L.R."/>
            <person name="Lozado R.J."/>
            <person name="Metzker M.L."/>
            <person name="Milosavljevic A."/>
            <person name="Miner G.R."/>
            <person name="Montgomery K.T."/>
            <person name="Morgan M.B."/>
            <person name="Nazareth L.V."/>
            <person name="Scott G."/>
            <person name="Sodergren E."/>
            <person name="Song X.-Z."/>
            <person name="Steffen D."/>
            <person name="Lovering R.C."/>
            <person name="Wheeler D.A."/>
            <person name="Worley K.C."/>
            <person name="Yuan Y."/>
            <person name="Zhang Z."/>
            <person name="Adams C.Q."/>
            <person name="Ansari-Lari M.A."/>
            <person name="Ayele M."/>
            <person name="Brown M.J."/>
            <person name="Chen G."/>
            <person name="Chen Z."/>
            <person name="Clerc-Blankenburg K.P."/>
            <person name="Davis C."/>
            <person name="Delgado O."/>
            <person name="Dinh H.H."/>
            <person name="Draper H."/>
            <person name="Gonzalez-Garay M.L."/>
            <person name="Havlak P."/>
            <person name="Jackson L.R."/>
            <person name="Jacob L.S."/>
            <person name="Kelly S.H."/>
            <person name="Li L."/>
            <person name="Li Z."/>
            <person name="Liu J."/>
            <person name="Liu W."/>
            <person name="Lu J."/>
            <person name="Maheshwari M."/>
            <person name="Nguyen B.-V."/>
            <person name="Okwuonu G.O."/>
            <person name="Pasternak S."/>
            <person name="Perez L.M."/>
            <person name="Plopper F.J.H."/>
            <person name="Santibanez J."/>
            <person name="Shen H."/>
            <person name="Tabor P.E."/>
            <person name="Verduzco D."/>
            <person name="Waldron L."/>
            <person name="Wang Q."/>
            <person name="Williams G.A."/>
            <person name="Zhang J."/>
            <person name="Zhou J."/>
            <person name="Allen C.C."/>
            <person name="Amin A.G."/>
            <person name="Anyalebechi V."/>
            <person name="Bailey M."/>
            <person name="Barbaria J.A."/>
            <person name="Bimage K.E."/>
            <person name="Bryant N.P."/>
            <person name="Burch P.E."/>
            <person name="Burkett C.E."/>
            <person name="Burrell K.L."/>
            <person name="Calderon E."/>
            <person name="Cardenas V."/>
            <person name="Carter K."/>
            <person name="Casias K."/>
            <person name="Cavazos I."/>
            <person name="Cavazos S.R."/>
            <person name="Ceasar H."/>
            <person name="Chacko J."/>
            <person name="Chan S.N."/>
            <person name="Chavez D."/>
            <person name="Christopoulos C."/>
            <person name="Chu J."/>
            <person name="Cockrell R."/>
            <person name="Cox C.D."/>
            <person name="Dang M."/>
            <person name="Dathorne S.R."/>
            <person name="David R."/>
            <person name="Davis C.M."/>
            <person name="Davy-Carroll L."/>
            <person name="Deshazo D.R."/>
            <person name="Donlin J.E."/>
            <person name="D'Souza L."/>
            <person name="Eaves K.A."/>
            <person name="Egan A."/>
            <person name="Emery-Cohen A.J."/>
            <person name="Escotto M."/>
            <person name="Flagg N."/>
            <person name="Forbes L.D."/>
            <person name="Gabisi A.M."/>
            <person name="Garza M."/>
            <person name="Hamilton C."/>
            <person name="Henderson N."/>
            <person name="Hernandez O."/>
            <person name="Hines S."/>
            <person name="Hogues M.E."/>
            <person name="Huang M."/>
            <person name="Idlebird D.G."/>
            <person name="Johnson R."/>
            <person name="Jolivet A."/>
            <person name="Jones S."/>
            <person name="Kagan R."/>
            <person name="King L.M."/>
            <person name="Leal B."/>
            <person name="Lebow H."/>
            <person name="Lee S."/>
            <person name="LeVan J.M."/>
            <person name="Lewis L.C."/>
            <person name="London P."/>
            <person name="Lorensuhewa L.M."/>
            <person name="Loulseged H."/>
            <person name="Lovett D.A."/>
            <person name="Lucier A."/>
            <person name="Lucier R.L."/>
            <person name="Ma J."/>
            <person name="Madu R.C."/>
            <person name="Mapua P."/>
            <person name="Martindale A.D."/>
            <person name="Martinez E."/>
            <person name="Massey E."/>
            <person name="Mawhiney S."/>
            <person name="Meador M.G."/>
            <person name="Mendez S."/>
            <person name="Mercado C."/>
            <person name="Mercado I.C."/>
            <person name="Merritt C.E."/>
            <person name="Miner Z.L."/>
            <person name="Minja E."/>
            <person name="Mitchell T."/>
            <person name="Mohabbat F."/>
            <person name="Mohabbat K."/>
            <person name="Montgomery B."/>
            <person name="Moore N."/>
            <person name="Morris S."/>
            <person name="Munidasa M."/>
            <person name="Ngo R.N."/>
            <person name="Nguyen N.B."/>
            <person name="Nickerson E."/>
            <person name="Nwaokelemeh O.O."/>
            <person name="Nwokenkwo S."/>
            <person name="Obregon M."/>
            <person name="Oguh M."/>
            <person name="Oragunye N."/>
            <person name="Oviedo R.J."/>
            <person name="Parish B.J."/>
            <person name="Parker D.N."/>
            <person name="Parrish J."/>
            <person name="Parks K.L."/>
            <person name="Paul H.A."/>
            <person name="Payton B.A."/>
            <person name="Perez A."/>
            <person name="Perrin W."/>
            <person name="Pickens A."/>
            <person name="Primus E.L."/>
            <person name="Pu L.-L."/>
            <person name="Puazo M."/>
            <person name="Quiles M.M."/>
            <person name="Quiroz J.B."/>
            <person name="Rabata D."/>
            <person name="Reeves K."/>
            <person name="Ruiz S.J."/>
            <person name="Shao H."/>
            <person name="Sisson I."/>
            <person name="Sonaike T."/>
            <person name="Sorelle R.P."/>
            <person name="Sutton A.E."/>
            <person name="Svatek A.F."/>
            <person name="Svetz L.A."/>
            <person name="Tamerisa K.S."/>
            <person name="Taylor T.R."/>
            <person name="Teague B."/>
            <person name="Thomas N."/>
            <person name="Thorn R.D."/>
            <person name="Trejos Z.Y."/>
            <person name="Trevino B.K."/>
            <person name="Ukegbu O.N."/>
            <person name="Urban J.B."/>
            <person name="Vasquez L.I."/>
            <person name="Vera V.A."/>
            <person name="Villasana D.M."/>
            <person name="Wang L."/>
            <person name="Ward-Moore S."/>
            <person name="Warren J.T."/>
            <person name="Wei X."/>
            <person name="White F."/>
            <person name="Williamson A.L."/>
            <person name="Wleczyk R."/>
            <person name="Wooden H.S."/>
            <person name="Wooden S.H."/>
            <person name="Yen J."/>
            <person name="Yoon L."/>
            <person name="Yoon V."/>
            <person name="Zorrilla S.E."/>
            <person name="Nelson D."/>
            <person name="Kucherlapati R."/>
            <person name="Weinstock G."/>
            <person name="Gibbs R.A."/>
        </authorList>
    </citation>
    <scope>NUCLEOTIDE SEQUENCE [LARGE SCALE GENOMIC DNA]</scope>
</reference>
<reference key="2">
    <citation type="submission" date="2005-07" db="EMBL/GenBank/DDBJ databases">
        <authorList>
            <person name="Mural R.J."/>
            <person name="Istrail S."/>
            <person name="Sutton G.G."/>
            <person name="Florea L."/>
            <person name="Halpern A.L."/>
            <person name="Mobarry C.M."/>
            <person name="Lippert R."/>
            <person name="Walenz B."/>
            <person name="Shatkay H."/>
            <person name="Dew I."/>
            <person name="Miller J.R."/>
            <person name="Flanigan M.J."/>
            <person name="Edwards N.J."/>
            <person name="Bolanos R."/>
            <person name="Fasulo D."/>
            <person name="Halldorsson B.V."/>
            <person name="Hannenhalli S."/>
            <person name="Turner R."/>
            <person name="Yooseph S."/>
            <person name="Lu F."/>
            <person name="Nusskern D.R."/>
            <person name="Shue B.C."/>
            <person name="Zheng X.H."/>
            <person name="Zhong F."/>
            <person name="Delcher A.L."/>
            <person name="Huson D.H."/>
            <person name="Kravitz S.A."/>
            <person name="Mouchard L."/>
            <person name="Reinert K."/>
            <person name="Remington K.A."/>
            <person name="Clark A.G."/>
            <person name="Waterman M.S."/>
            <person name="Eichler E.E."/>
            <person name="Adams M.D."/>
            <person name="Hunkapiller M.W."/>
            <person name="Myers E.W."/>
            <person name="Venter J.C."/>
        </authorList>
    </citation>
    <scope>NUCLEOTIDE SEQUENCE [LARGE SCALE GENOMIC DNA]</scope>
</reference>
<accession>A6NL08</accession>
<dbReference type="EMBL" id="AC125816">
    <property type="status" value="NOT_ANNOTATED_CDS"/>
    <property type="molecule type" value="Genomic_DNA"/>
</dbReference>
<dbReference type="EMBL" id="CH471054">
    <property type="protein sequence ID" value="EAW96808.1"/>
    <property type="molecule type" value="Genomic_DNA"/>
</dbReference>
<dbReference type="CCDS" id="CCDS31820.1"/>
<dbReference type="RefSeq" id="NP_001005497.1">
    <property type="nucleotide sequence ID" value="NM_001005497.2"/>
</dbReference>
<dbReference type="SMR" id="A6NL08"/>
<dbReference type="BioGRID" id="133514">
    <property type="interactions" value="1"/>
</dbReference>
<dbReference type="FunCoup" id="A6NL08">
    <property type="interactions" value="416"/>
</dbReference>
<dbReference type="STRING" id="9606.ENSP00000493430"/>
<dbReference type="GlyCosmos" id="A6NL08">
    <property type="glycosylation" value="1 site, No reported glycans"/>
</dbReference>
<dbReference type="GlyGen" id="A6NL08">
    <property type="glycosylation" value="2 sites, 1 O-linked glycan (1 site)"/>
</dbReference>
<dbReference type="iPTMnet" id="A6NL08"/>
<dbReference type="PhosphoSitePlus" id="A6NL08"/>
<dbReference type="BioMuta" id="OR6C75"/>
<dbReference type="PaxDb" id="9606-ENSP00000368987"/>
<dbReference type="ProteomicsDB" id="1442"/>
<dbReference type="Antibodypedia" id="27597">
    <property type="antibodies" value="33 antibodies from 17 providers"/>
</dbReference>
<dbReference type="DNASU" id="390323"/>
<dbReference type="Ensembl" id="ENST00000641576.1">
    <property type="protein sequence ID" value="ENSP00000493430.1"/>
    <property type="gene ID" value="ENSG00000187857.5"/>
</dbReference>
<dbReference type="GeneID" id="390323"/>
<dbReference type="KEGG" id="hsa:390323"/>
<dbReference type="MANE-Select" id="ENST00000641576.1">
    <property type="protein sequence ID" value="ENSP00000493430.1"/>
    <property type="RefSeq nucleotide sequence ID" value="NM_001005497.2"/>
    <property type="RefSeq protein sequence ID" value="NP_001005497.1"/>
</dbReference>
<dbReference type="UCSC" id="uc010spk.2">
    <property type="organism name" value="human"/>
</dbReference>
<dbReference type="AGR" id="HGNC:31304"/>
<dbReference type="CTD" id="390323"/>
<dbReference type="DisGeNET" id="390323"/>
<dbReference type="GeneCards" id="OR6C75"/>
<dbReference type="HGNC" id="HGNC:31304">
    <property type="gene designation" value="OR6C75"/>
</dbReference>
<dbReference type="HPA" id="ENSG00000187857">
    <property type="expression patterns" value="Not detected"/>
</dbReference>
<dbReference type="neXtProt" id="NX_A6NL08"/>
<dbReference type="PharmGKB" id="PA134873229"/>
<dbReference type="VEuPathDB" id="HostDB:ENSG00000187857"/>
<dbReference type="eggNOG" id="ENOG502SI9E">
    <property type="taxonomic scope" value="Eukaryota"/>
</dbReference>
<dbReference type="GeneTree" id="ENSGT01130000278269"/>
<dbReference type="HOGENOM" id="CLU_012526_1_0_1"/>
<dbReference type="InParanoid" id="A6NL08"/>
<dbReference type="OMA" id="RIPSMSQ"/>
<dbReference type="OrthoDB" id="9445631at2759"/>
<dbReference type="PAN-GO" id="A6NL08">
    <property type="GO annotations" value="1 GO annotation based on evolutionary models"/>
</dbReference>
<dbReference type="PhylomeDB" id="A6NL08"/>
<dbReference type="TreeFam" id="TF336833"/>
<dbReference type="PathwayCommons" id="A6NL08"/>
<dbReference type="Reactome" id="R-HSA-9752946">
    <property type="pathway name" value="Expression and translocation of olfactory receptors"/>
</dbReference>
<dbReference type="SignaLink" id="A6NL08"/>
<dbReference type="BioGRID-ORCS" id="390323">
    <property type="hits" value="7 hits in 705 CRISPR screens"/>
</dbReference>
<dbReference type="GenomeRNAi" id="390323"/>
<dbReference type="Pharos" id="A6NL08">
    <property type="development level" value="Tdark"/>
</dbReference>
<dbReference type="PRO" id="PR:A6NL08"/>
<dbReference type="Proteomes" id="UP000005640">
    <property type="component" value="Chromosome 12"/>
</dbReference>
<dbReference type="RNAct" id="A6NL08">
    <property type="molecule type" value="protein"/>
</dbReference>
<dbReference type="Bgee" id="ENSG00000187857">
    <property type="expression patterns" value="Expressed in primordial germ cell in gonad and 2 other cell types or tissues"/>
</dbReference>
<dbReference type="ExpressionAtlas" id="A6NL08">
    <property type="expression patterns" value="baseline and differential"/>
</dbReference>
<dbReference type="GO" id="GO:0005886">
    <property type="term" value="C:plasma membrane"/>
    <property type="evidence" value="ECO:0007669"/>
    <property type="project" value="UniProtKB-SubCell"/>
</dbReference>
<dbReference type="GO" id="GO:0004930">
    <property type="term" value="F:G protein-coupled receptor activity"/>
    <property type="evidence" value="ECO:0007669"/>
    <property type="project" value="UniProtKB-KW"/>
</dbReference>
<dbReference type="GO" id="GO:0004984">
    <property type="term" value="F:olfactory receptor activity"/>
    <property type="evidence" value="ECO:0000318"/>
    <property type="project" value="GO_Central"/>
</dbReference>
<dbReference type="CDD" id="cd15912">
    <property type="entry name" value="7tmA_OR6C-like"/>
    <property type="match status" value="1"/>
</dbReference>
<dbReference type="FunFam" id="1.10.1220.70:FF:000001">
    <property type="entry name" value="Olfactory receptor"/>
    <property type="match status" value="1"/>
</dbReference>
<dbReference type="FunFam" id="1.20.1070.10:FF:000013">
    <property type="entry name" value="Olfactory receptor"/>
    <property type="match status" value="1"/>
</dbReference>
<dbReference type="Gene3D" id="1.20.1070.10">
    <property type="entry name" value="Rhodopsin 7-helix transmembrane proteins"/>
    <property type="match status" value="1"/>
</dbReference>
<dbReference type="InterPro" id="IPR000276">
    <property type="entry name" value="GPCR_Rhodpsn"/>
</dbReference>
<dbReference type="InterPro" id="IPR017452">
    <property type="entry name" value="GPCR_Rhodpsn_7TM"/>
</dbReference>
<dbReference type="InterPro" id="IPR000725">
    <property type="entry name" value="Olfact_rcpt"/>
</dbReference>
<dbReference type="InterPro" id="IPR047132">
    <property type="entry name" value="Olfact_rcpt_6C-like"/>
</dbReference>
<dbReference type="PANTHER" id="PTHR26454">
    <property type="entry name" value="OLFACTORY RECEPTOR"/>
    <property type="match status" value="1"/>
</dbReference>
<dbReference type="PANTHER" id="PTHR26454:SF79">
    <property type="entry name" value="OLFACTORY RECEPTOR 6C75"/>
    <property type="match status" value="1"/>
</dbReference>
<dbReference type="Pfam" id="PF13853">
    <property type="entry name" value="7tm_4"/>
    <property type="match status" value="1"/>
</dbReference>
<dbReference type="PRINTS" id="PR00237">
    <property type="entry name" value="GPCRRHODOPSN"/>
</dbReference>
<dbReference type="PRINTS" id="PR00245">
    <property type="entry name" value="OLFACTORYR"/>
</dbReference>
<dbReference type="SUPFAM" id="SSF81321">
    <property type="entry name" value="Family A G protein-coupled receptor-like"/>
    <property type="match status" value="1"/>
</dbReference>
<dbReference type="PROSITE" id="PS00237">
    <property type="entry name" value="G_PROTEIN_RECEP_F1_1"/>
    <property type="match status" value="1"/>
</dbReference>
<dbReference type="PROSITE" id="PS50262">
    <property type="entry name" value="G_PROTEIN_RECEP_F1_2"/>
    <property type="match status" value="1"/>
</dbReference>
<keyword id="KW-1003">Cell membrane</keyword>
<keyword id="KW-1015">Disulfide bond</keyword>
<keyword id="KW-0297">G-protein coupled receptor</keyword>
<keyword id="KW-0325">Glycoprotein</keyword>
<keyword id="KW-0472">Membrane</keyword>
<keyword id="KW-0552">Olfaction</keyword>
<keyword id="KW-0675">Receptor</keyword>
<keyword id="KW-1185">Reference proteome</keyword>
<keyword id="KW-0716">Sensory transduction</keyword>
<keyword id="KW-0807">Transducer</keyword>
<keyword id="KW-0812">Transmembrane</keyword>
<keyword id="KW-1133">Transmembrane helix</keyword>